<dbReference type="EMBL" id="AK125877">
    <property type="protein sequence ID" value="BAG54260.1"/>
    <property type="molecule type" value="mRNA"/>
</dbReference>
<dbReference type="EMBL" id="AK302720">
    <property type="protein sequence ID" value="BAG63939.1"/>
    <property type="molecule type" value="mRNA"/>
</dbReference>
<dbReference type="EMBL" id="AC009567">
    <property type="status" value="NOT_ANNOTATED_CDS"/>
    <property type="molecule type" value="Genomic_DNA"/>
</dbReference>
<dbReference type="EMBL" id="CH471056">
    <property type="protein sequence ID" value="EAX04902.1"/>
    <property type="molecule type" value="Genomic_DNA"/>
</dbReference>
<dbReference type="EMBL" id="CH471056">
    <property type="protein sequence ID" value="EAX04903.1"/>
    <property type="molecule type" value="Genomic_DNA"/>
</dbReference>
<dbReference type="EMBL" id="BC028588">
    <property type="protein sequence ID" value="AAH28588.1"/>
    <property type="molecule type" value="mRNA"/>
</dbReference>
<dbReference type="CCDS" id="CCDS3790.1">
    <molecule id="Q8TBY0-1"/>
</dbReference>
<dbReference type="CCDS" id="CCDS64085.1">
    <molecule id="Q8TBY0-3"/>
</dbReference>
<dbReference type="CCDS" id="CCDS64086.1">
    <molecule id="Q8TBY0-2"/>
</dbReference>
<dbReference type="RefSeq" id="NP_001264100.1">
    <molecule id="Q8TBY0-3"/>
    <property type="nucleotide sequence ID" value="NM_001277171.2"/>
</dbReference>
<dbReference type="RefSeq" id="NP_001264102.1">
    <molecule id="Q8TBY0-2"/>
    <property type="nucleotide sequence ID" value="NM_001277173.2"/>
</dbReference>
<dbReference type="RefSeq" id="NP_659416.1">
    <molecule id="Q8TBY0-1"/>
    <property type="nucleotide sequence ID" value="NM_144979.5"/>
</dbReference>
<dbReference type="RefSeq" id="XP_006714182.1">
    <property type="nucleotide sequence ID" value="XM_006714119.2"/>
</dbReference>
<dbReference type="RefSeq" id="XP_006714183.1">
    <molecule id="Q8TBY0-2"/>
    <property type="nucleotide sequence ID" value="XM_006714120.2"/>
</dbReference>
<dbReference type="RefSeq" id="XP_011529994.1">
    <molecule id="Q8TBY0-1"/>
    <property type="nucleotide sequence ID" value="XM_011531692.3"/>
</dbReference>
<dbReference type="RefSeq" id="XP_011529995.1">
    <molecule id="Q8TBY0-1"/>
    <property type="nucleotide sequence ID" value="XM_011531693.3"/>
</dbReference>
<dbReference type="RefSeq" id="XP_011529996.1">
    <molecule id="Q8TBY0-1"/>
    <property type="nucleotide sequence ID" value="XM_011531694.3"/>
</dbReference>
<dbReference type="RefSeq" id="XP_011529997.1">
    <molecule id="Q8TBY0-1"/>
    <property type="nucleotide sequence ID" value="XM_011531695.4"/>
</dbReference>
<dbReference type="RefSeq" id="XP_011529998.1">
    <molecule id="Q8TBY0-1"/>
    <property type="nucleotide sequence ID" value="XM_011531696.3"/>
</dbReference>
<dbReference type="RefSeq" id="XP_054205092.1">
    <molecule id="Q8TBY0-1"/>
    <property type="nucleotide sequence ID" value="XM_054349117.1"/>
</dbReference>
<dbReference type="RefSeq" id="XP_054205093.1">
    <molecule id="Q8TBY0-1"/>
    <property type="nucleotide sequence ID" value="XM_054349118.1"/>
</dbReference>
<dbReference type="RefSeq" id="XP_054205094.1">
    <molecule id="Q8TBY0-1"/>
    <property type="nucleotide sequence ID" value="XM_054349119.1"/>
</dbReference>
<dbReference type="RefSeq" id="XP_054205095.1">
    <molecule id="Q8TBY0-1"/>
    <property type="nucleotide sequence ID" value="XM_054349120.1"/>
</dbReference>
<dbReference type="RefSeq" id="XP_054205096.1">
    <molecule id="Q8TBY0-1"/>
    <property type="nucleotide sequence ID" value="XM_054349121.1"/>
</dbReference>
<dbReference type="RefSeq" id="XP_054205098.1">
    <molecule id="Q8TBY0-2"/>
    <property type="nucleotide sequence ID" value="XM_054349123.1"/>
</dbReference>
<dbReference type="SMR" id="Q8TBY0"/>
<dbReference type="BioGRID" id="127937">
    <property type="interactions" value="13"/>
</dbReference>
<dbReference type="FunCoup" id="Q8TBY0">
    <property type="interactions" value="395"/>
</dbReference>
<dbReference type="IntAct" id="Q8TBY0">
    <property type="interactions" value="10"/>
</dbReference>
<dbReference type="STRING" id="9606.ENSP00000281722"/>
<dbReference type="GlyGen" id="Q8TBY0">
    <property type="glycosylation" value="1 site, 1 O-linked glycan (1 site)"/>
</dbReference>
<dbReference type="iPTMnet" id="Q8TBY0"/>
<dbReference type="PhosphoSitePlus" id="Q8TBY0"/>
<dbReference type="BioMuta" id="RBM46"/>
<dbReference type="DMDM" id="74760436"/>
<dbReference type="jPOST" id="Q8TBY0"/>
<dbReference type="MassIVE" id="Q8TBY0"/>
<dbReference type="PaxDb" id="9606-ENSP00000281722"/>
<dbReference type="PeptideAtlas" id="Q8TBY0"/>
<dbReference type="ProteomicsDB" id="3801"/>
<dbReference type="ProteomicsDB" id="5566"/>
<dbReference type="ProteomicsDB" id="74047">
    <molecule id="Q8TBY0-1"/>
</dbReference>
<dbReference type="Antibodypedia" id="16839">
    <property type="antibodies" value="118 antibodies from 22 providers"/>
</dbReference>
<dbReference type="DNASU" id="166863"/>
<dbReference type="Ensembl" id="ENST00000281722.8">
    <molecule id="Q8TBY0-1"/>
    <property type="protein sequence ID" value="ENSP00000281722.3"/>
    <property type="gene ID" value="ENSG00000151962.8"/>
</dbReference>
<dbReference type="Ensembl" id="ENST00000510397.5">
    <molecule id="Q8TBY0-2"/>
    <property type="protein sequence ID" value="ENSP00000422813.1"/>
    <property type="gene ID" value="ENSG00000151962.8"/>
</dbReference>
<dbReference type="Ensembl" id="ENST00000514866.5">
    <molecule id="Q8TBY0-3"/>
    <property type="protein sequence ID" value="ENSP00000424500.1"/>
    <property type="gene ID" value="ENSG00000151962.8"/>
</dbReference>
<dbReference type="GeneID" id="166863"/>
<dbReference type="KEGG" id="hsa:166863"/>
<dbReference type="MANE-Select" id="ENST00000281722.8">
    <property type="protein sequence ID" value="ENSP00000281722.3"/>
    <property type="RefSeq nucleotide sequence ID" value="NM_144979.5"/>
    <property type="RefSeq protein sequence ID" value="NP_659416.1"/>
</dbReference>
<dbReference type="UCSC" id="uc003ioo.5">
    <molecule id="Q8TBY0-1"/>
    <property type="organism name" value="human"/>
</dbReference>
<dbReference type="AGR" id="HGNC:28401"/>
<dbReference type="CTD" id="166863"/>
<dbReference type="DisGeNET" id="166863"/>
<dbReference type="GeneCards" id="RBM46"/>
<dbReference type="HGNC" id="HGNC:28401">
    <property type="gene designation" value="RBM46"/>
</dbReference>
<dbReference type="HPA" id="ENSG00000151962">
    <property type="expression patterns" value="Tissue enriched (testis)"/>
</dbReference>
<dbReference type="MIM" id="620147">
    <property type="type" value="gene"/>
</dbReference>
<dbReference type="neXtProt" id="NX_Q8TBY0"/>
<dbReference type="OpenTargets" id="ENSG00000151962"/>
<dbReference type="PharmGKB" id="PA162400810"/>
<dbReference type="VEuPathDB" id="HostDB:ENSG00000151962"/>
<dbReference type="eggNOG" id="KOG0117">
    <property type="taxonomic scope" value="Eukaryota"/>
</dbReference>
<dbReference type="GeneTree" id="ENSGT00940000155927"/>
<dbReference type="HOGENOM" id="CLU_022960_5_0_1"/>
<dbReference type="InParanoid" id="Q8TBY0"/>
<dbReference type="OMA" id="QSYFMPE"/>
<dbReference type="OrthoDB" id="3800936at2759"/>
<dbReference type="PAN-GO" id="Q8TBY0">
    <property type="GO annotations" value="2 GO annotations based on evolutionary models"/>
</dbReference>
<dbReference type="PhylomeDB" id="Q8TBY0"/>
<dbReference type="TreeFam" id="TF314932"/>
<dbReference type="PathwayCommons" id="Q8TBY0"/>
<dbReference type="SignaLink" id="Q8TBY0"/>
<dbReference type="BioGRID-ORCS" id="166863">
    <property type="hits" value="11 hits in 1150 CRISPR screens"/>
</dbReference>
<dbReference type="GenomeRNAi" id="166863"/>
<dbReference type="Pharos" id="Q8TBY0">
    <property type="development level" value="Tbio"/>
</dbReference>
<dbReference type="PRO" id="PR:Q8TBY0"/>
<dbReference type="Proteomes" id="UP000005640">
    <property type="component" value="Chromosome 4"/>
</dbReference>
<dbReference type="RNAct" id="Q8TBY0">
    <property type="molecule type" value="protein"/>
</dbReference>
<dbReference type="Bgee" id="ENSG00000151962">
    <property type="expression patterns" value="Expressed in male germ line stem cell (sensu Vertebrata) in testis and 62 other cell types or tissues"/>
</dbReference>
<dbReference type="ExpressionAtlas" id="Q8TBY0">
    <property type="expression patterns" value="baseline and differential"/>
</dbReference>
<dbReference type="GO" id="GO:0005737">
    <property type="term" value="C:cytoplasm"/>
    <property type="evidence" value="ECO:0000250"/>
    <property type="project" value="UniProtKB"/>
</dbReference>
<dbReference type="GO" id="GO:0005634">
    <property type="term" value="C:nucleus"/>
    <property type="evidence" value="ECO:0000318"/>
    <property type="project" value="GO_Central"/>
</dbReference>
<dbReference type="GO" id="GO:0003729">
    <property type="term" value="F:mRNA binding"/>
    <property type="evidence" value="ECO:0000318"/>
    <property type="project" value="GO_Central"/>
</dbReference>
<dbReference type="GO" id="GO:0051728">
    <property type="term" value="P:cell cycle switching, mitotic to meiotic cell cycle"/>
    <property type="evidence" value="ECO:0000250"/>
    <property type="project" value="UniProtKB"/>
</dbReference>
<dbReference type="GO" id="GO:0007143">
    <property type="term" value="P:female meiotic nuclear division"/>
    <property type="evidence" value="ECO:0000250"/>
    <property type="project" value="UniProtKB"/>
</dbReference>
<dbReference type="GO" id="GO:0007140">
    <property type="term" value="P:male meiotic nuclear division"/>
    <property type="evidence" value="ECO:0000250"/>
    <property type="project" value="UniProtKB"/>
</dbReference>
<dbReference type="GO" id="GO:0048255">
    <property type="term" value="P:mRNA stabilization"/>
    <property type="evidence" value="ECO:0007669"/>
    <property type="project" value="Ensembl"/>
</dbReference>
<dbReference type="GO" id="GO:0048477">
    <property type="term" value="P:oogenesis"/>
    <property type="evidence" value="ECO:0000250"/>
    <property type="project" value="UniProtKB"/>
</dbReference>
<dbReference type="GO" id="GO:0048515">
    <property type="term" value="P:spermatid differentiation"/>
    <property type="evidence" value="ECO:0000250"/>
    <property type="project" value="UniProtKB"/>
</dbReference>
<dbReference type="GO" id="GO:0007283">
    <property type="term" value="P:spermatogenesis"/>
    <property type="evidence" value="ECO:0000250"/>
    <property type="project" value="UniProtKB"/>
</dbReference>
<dbReference type="GO" id="GO:0001829">
    <property type="term" value="P:trophectodermal cell differentiation"/>
    <property type="evidence" value="ECO:0007669"/>
    <property type="project" value="Ensembl"/>
</dbReference>
<dbReference type="CDD" id="cd19901">
    <property type="entry name" value="DSRM_RBM46"/>
    <property type="match status" value="1"/>
</dbReference>
<dbReference type="CDD" id="cd12484">
    <property type="entry name" value="RRM1_RBM46"/>
    <property type="match status" value="1"/>
</dbReference>
<dbReference type="CDD" id="cd12492">
    <property type="entry name" value="RRM2_RBM46"/>
    <property type="match status" value="1"/>
</dbReference>
<dbReference type="CDD" id="cd12496">
    <property type="entry name" value="RRM3_RBM46"/>
    <property type="match status" value="1"/>
</dbReference>
<dbReference type="FunFam" id="3.30.70.330:FF:000022">
    <property type="entry name" value="APOBEC1 complementation factor isoform X1"/>
    <property type="match status" value="1"/>
</dbReference>
<dbReference type="FunFam" id="3.30.70.330:FF:000026">
    <property type="entry name" value="APOBEC1 complementation factor isoform X1"/>
    <property type="match status" value="1"/>
</dbReference>
<dbReference type="FunFam" id="3.30.70.330:FF:000168">
    <property type="entry name" value="RNA binding motif protein 46"/>
    <property type="match status" value="1"/>
</dbReference>
<dbReference type="Gene3D" id="3.30.70.330">
    <property type="match status" value="3"/>
</dbReference>
<dbReference type="InterPro" id="IPR006535">
    <property type="entry name" value="HnRNP_R/Q_splicing_fac"/>
</dbReference>
<dbReference type="InterPro" id="IPR012677">
    <property type="entry name" value="Nucleotide-bd_a/b_plait_sf"/>
</dbReference>
<dbReference type="InterPro" id="IPR035979">
    <property type="entry name" value="RBD_domain_sf"/>
</dbReference>
<dbReference type="InterPro" id="IPR044462">
    <property type="entry name" value="RBM46_DSR"/>
</dbReference>
<dbReference type="InterPro" id="IPR034434">
    <property type="entry name" value="RBM46_RRM1"/>
</dbReference>
<dbReference type="InterPro" id="IPR034435">
    <property type="entry name" value="RBM46_RRM2"/>
</dbReference>
<dbReference type="InterPro" id="IPR047837">
    <property type="entry name" value="RBM46_RRM3"/>
</dbReference>
<dbReference type="InterPro" id="IPR000504">
    <property type="entry name" value="RRM_dom"/>
</dbReference>
<dbReference type="NCBIfam" id="TIGR01648">
    <property type="entry name" value="hnRNP-R-Q"/>
    <property type="match status" value="1"/>
</dbReference>
<dbReference type="PANTHER" id="PTHR21245">
    <property type="entry name" value="HETEROGENEOUS NUCLEAR RIBONUCLEOPROTEIN"/>
    <property type="match status" value="1"/>
</dbReference>
<dbReference type="Pfam" id="PF14709">
    <property type="entry name" value="DND1_DSRM"/>
    <property type="match status" value="1"/>
</dbReference>
<dbReference type="Pfam" id="PF00076">
    <property type="entry name" value="RRM_1"/>
    <property type="match status" value="3"/>
</dbReference>
<dbReference type="SMART" id="SM00360">
    <property type="entry name" value="RRM"/>
    <property type="match status" value="3"/>
</dbReference>
<dbReference type="SUPFAM" id="SSF54928">
    <property type="entry name" value="RNA-binding domain, RBD"/>
    <property type="match status" value="3"/>
</dbReference>
<dbReference type="PROSITE" id="PS50102">
    <property type="entry name" value="RRM"/>
    <property type="match status" value="3"/>
</dbReference>
<protein>
    <recommendedName>
        <fullName>Probable RNA-binding protein 46</fullName>
    </recommendedName>
    <alternativeName>
        <fullName>Cancer/testis antigen 68</fullName>
        <shortName>CT68</shortName>
    </alternativeName>
    <alternativeName>
        <fullName>RNA-binding motif protein 46</fullName>
    </alternativeName>
</protein>
<accession>Q8TBY0</accession>
<accession>B3KWU8</accession>
<accession>B4DZ27</accession>
<proteinExistence type="evidence at protein level"/>
<keyword id="KW-0025">Alternative splicing</keyword>
<keyword id="KW-0963">Cytoplasm</keyword>
<keyword id="KW-0221">Differentiation</keyword>
<keyword id="KW-0469">Meiosis</keyword>
<keyword id="KW-0896">Oogenesis</keyword>
<keyword id="KW-1267">Proteomics identification</keyword>
<keyword id="KW-1185">Reference proteome</keyword>
<keyword id="KW-0677">Repeat</keyword>
<keyword id="KW-0694">RNA-binding</keyword>
<keyword id="KW-0744">Spermatogenesis</keyword>
<gene>
    <name type="primary">RBM46</name>
</gene>
<name>RBM46_HUMAN</name>
<comment type="function">
    <text evidence="1">Essential for male and female fertility, playing a crucial role in regulating germ cell development by ensuring the proper progression of meiosis prophase I (By similarity). Regulates mitotic-to-meiotic transition in spermatogenesis by forming a complex with MEIOC and YTHDC2 which recognizes and down-regulates mitotic transcripts for a successful meiotic entry (By similarity). Required for normal synaptonemal complex formation during meiosis, binding meiotic cohesin subunit mRNAs containing GCCUAU/GUUCGA motifs in their 3'UTRs regions and positively regulating their translation (By similarity). Required for spermatogonial differentiation in both developing and adult testis (By similarity).</text>
</comment>
<comment type="subunit">
    <text evidence="1">Interacts with YTHDC2, MEIOC, MOV10, CNOT6L, DDX4, UPF1 and PABPC1.</text>
</comment>
<comment type="interaction">
    <interactant intactId="EBI-12068216">
        <id>Q8TBY0</id>
    </interactant>
    <interactant intactId="EBI-25837549">
        <id>P28329-3</id>
        <label>CHAT</label>
    </interactant>
    <organismsDiffer>false</organismsDiffer>
    <experiments>3</experiments>
</comment>
<comment type="interaction">
    <interactant intactId="EBI-12068216">
        <id>Q8TBY0</id>
    </interactant>
    <interactant intactId="EBI-348399">
        <id>P22607</id>
        <label>FGFR3</label>
    </interactant>
    <organismsDiffer>false</organismsDiffer>
    <experiments>3</experiments>
</comment>
<comment type="interaction">
    <interactant intactId="EBI-12068216">
        <id>Q8TBY0</id>
    </interactant>
    <interactant intactId="EBI-1759806">
        <id>O75593</id>
        <label>FOXH1</label>
    </interactant>
    <organismsDiffer>false</organismsDiffer>
    <experiments>3</experiments>
</comment>
<comment type="interaction">
    <interactant intactId="EBI-12068216">
        <id>Q8TBY0</id>
    </interactant>
    <interactant intactId="EBI-739467">
        <id>Q9H8Y8</id>
        <label>GORASP2</label>
    </interactant>
    <organismsDiffer>false</organismsDiffer>
    <experiments>3</experiments>
</comment>
<comment type="interaction">
    <interactant intactId="EBI-12068216">
        <id>Q8TBY0</id>
    </interactant>
    <interactant intactId="EBI-351506">
        <id>P06396</id>
        <label>GSN</label>
    </interactant>
    <organismsDiffer>false</organismsDiffer>
    <experiments>3</experiments>
</comment>
<comment type="interaction">
    <interactant intactId="EBI-12068216">
        <id>Q8TBY0</id>
    </interactant>
    <interactant intactId="EBI-350145">
        <id>P01112</id>
        <label>HRAS</label>
    </interactant>
    <organismsDiffer>false</organismsDiffer>
    <experiments>3</experiments>
</comment>
<comment type="interaction">
    <interactant intactId="EBI-12068216">
        <id>Q8TBY0</id>
    </interactant>
    <interactant intactId="EBI-2823850">
        <id>A0AV96</id>
        <label>RBM47</label>
    </interactant>
    <organismsDiffer>false</organismsDiffer>
    <experiments>2</experiments>
</comment>
<comment type="interaction">
    <interactant intactId="EBI-12068216">
        <id>Q8TBY0</id>
    </interactant>
    <interactant intactId="EBI-11987469">
        <id>Q6ZRY4</id>
        <label>RBPMS2</label>
    </interactant>
    <organismsDiffer>false</organismsDiffer>
    <experiments>3</experiments>
</comment>
<comment type="interaction">
    <interactant intactId="EBI-12068216">
        <id>Q8TBY0</id>
    </interactant>
    <interactant intactId="EBI-372899">
        <id>Q13148</id>
        <label>TARDBP</label>
    </interactant>
    <organismsDiffer>false</organismsDiffer>
    <experiments>3</experiments>
</comment>
<comment type="subcellular location">
    <subcellularLocation>
        <location evidence="1">Cytoplasm</location>
    </subcellularLocation>
</comment>
<comment type="alternative products">
    <event type="alternative splicing"/>
    <isoform>
        <id>Q8TBY0-1</id>
        <name>1</name>
        <sequence type="displayed"/>
    </isoform>
    <isoform>
        <id>Q8TBY0-2</id>
        <name>2</name>
        <sequence type="described" ref="VSP_055251"/>
    </isoform>
    <isoform>
        <id>Q8TBY0-3</id>
        <name>3</name>
        <sequence type="described" ref="VSP_055252"/>
    </isoform>
</comment>
<organism>
    <name type="scientific">Homo sapiens</name>
    <name type="common">Human</name>
    <dbReference type="NCBI Taxonomy" id="9606"/>
    <lineage>
        <taxon>Eukaryota</taxon>
        <taxon>Metazoa</taxon>
        <taxon>Chordata</taxon>
        <taxon>Craniata</taxon>
        <taxon>Vertebrata</taxon>
        <taxon>Euteleostomi</taxon>
        <taxon>Mammalia</taxon>
        <taxon>Eutheria</taxon>
        <taxon>Euarchontoglires</taxon>
        <taxon>Primates</taxon>
        <taxon>Haplorrhini</taxon>
        <taxon>Catarrhini</taxon>
        <taxon>Hominidae</taxon>
        <taxon>Homo</taxon>
    </lineage>
</organism>
<reference key="1">
    <citation type="journal article" date="2004" name="Nat. Genet.">
        <title>Complete sequencing and characterization of 21,243 full-length human cDNAs.</title>
        <authorList>
            <person name="Ota T."/>
            <person name="Suzuki Y."/>
            <person name="Nishikawa T."/>
            <person name="Otsuki T."/>
            <person name="Sugiyama T."/>
            <person name="Irie R."/>
            <person name="Wakamatsu A."/>
            <person name="Hayashi K."/>
            <person name="Sato H."/>
            <person name="Nagai K."/>
            <person name="Kimura K."/>
            <person name="Makita H."/>
            <person name="Sekine M."/>
            <person name="Obayashi M."/>
            <person name="Nishi T."/>
            <person name="Shibahara T."/>
            <person name="Tanaka T."/>
            <person name="Ishii S."/>
            <person name="Yamamoto J."/>
            <person name="Saito K."/>
            <person name="Kawai Y."/>
            <person name="Isono Y."/>
            <person name="Nakamura Y."/>
            <person name="Nagahari K."/>
            <person name="Murakami K."/>
            <person name="Yasuda T."/>
            <person name="Iwayanagi T."/>
            <person name="Wagatsuma M."/>
            <person name="Shiratori A."/>
            <person name="Sudo H."/>
            <person name="Hosoiri T."/>
            <person name="Kaku Y."/>
            <person name="Kodaira H."/>
            <person name="Kondo H."/>
            <person name="Sugawara M."/>
            <person name="Takahashi M."/>
            <person name="Kanda K."/>
            <person name="Yokoi T."/>
            <person name="Furuya T."/>
            <person name="Kikkawa E."/>
            <person name="Omura Y."/>
            <person name="Abe K."/>
            <person name="Kamihara K."/>
            <person name="Katsuta N."/>
            <person name="Sato K."/>
            <person name="Tanikawa M."/>
            <person name="Yamazaki M."/>
            <person name="Ninomiya K."/>
            <person name="Ishibashi T."/>
            <person name="Yamashita H."/>
            <person name="Murakawa K."/>
            <person name="Fujimori K."/>
            <person name="Tanai H."/>
            <person name="Kimata M."/>
            <person name="Watanabe M."/>
            <person name="Hiraoka S."/>
            <person name="Chiba Y."/>
            <person name="Ishida S."/>
            <person name="Ono Y."/>
            <person name="Takiguchi S."/>
            <person name="Watanabe S."/>
            <person name="Yosida M."/>
            <person name="Hotuta T."/>
            <person name="Kusano J."/>
            <person name="Kanehori K."/>
            <person name="Takahashi-Fujii A."/>
            <person name="Hara H."/>
            <person name="Tanase T.-O."/>
            <person name="Nomura Y."/>
            <person name="Togiya S."/>
            <person name="Komai F."/>
            <person name="Hara R."/>
            <person name="Takeuchi K."/>
            <person name="Arita M."/>
            <person name="Imose N."/>
            <person name="Musashino K."/>
            <person name="Yuuki H."/>
            <person name="Oshima A."/>
            <person name="Sasaki N."/>
            <person name="Aotsuka S."/>
            <person name="Yoshikawa Y."/>
            <person name="Matsunawa H."/>
            <person name="Ichihara T."/>
            <person name="Shiohata N."/>
            <person name="Sano S."/>
            <person name="Moriya S."/>
            <person name="Momiyama H."/>
            <person name="Satoh N."/>
            <person name="Takami S."/>
            <person name="Terashima Y."/>
            <person name="Suzuki O."/>
            <person name="Nakagawa S."/>
            <person name="Senoh A."/>
            <person name="Mizoguchi H."/>
            <person name="Goto Y."/>
            <person name="Shimizu F."/>
            <person name="Wakebe H."/>
            <person name="Hishigaki H."/>
            <person name="Watanabe T."/>
            <person name="Sugiyama A."/>
            <person name="Takemoto M."/>
            <person name="Kawakami B."/>
            <person name="Yamazaki M."/>
            <person name="Watanabe K."/>
            <person name="Kumagai A."/>
            <person name="Itakura S."/>
            <person name="Fukuzumi Y."/>
            <person name="Fujimori Y."/>
            <person name="Komiyama M."/>
            <person name="Tashiro H."/>
            <person name="Tanigami A."/>
            <person name="Fujiwara T."/>
            <person name="Ono T."/>
            <person name="Yamada K."/>
            <person name="Fujii Y."/>
            <person name="Ozaki K."/>
            <person name="Hirao M."/>
            <person name="Ohmori Y."/>
            <person name="Kawabata A."/>
            <person name="Hikiji T."/>
            <person name="Kobatake N."/>
            <person name="Inagaki H."/>
            <person name="Ikema Y."/>
            <person name="Okamoto S."/>
            <person name="Okitani R."/>
            <person name="Kawakami T."/>
            <person name="Noguchi S."/>
            <person name="Itoh T."/>
            <person name="Shigeta K."/>
            <person name="Senba T."/>
            <person name="Matsumura K."/>
            <person name="Nakajima Y."/>
            <person name="Mizuno T."/>
            <person name="Morinaga M."/>
            <person name="Sasaki M."/>
            <person name="Togashi T."/>
            <person name="Oyama M."/>
            <person name="Hata H."/>
            <person name="Watanabe M."/>
            <person name="Komatsu T."/>
            <person name="Mizushima-Sugano J."/>
            <person name="Satoh T."/>
            <person name="Shirai Y."/>
            <person name="Takahashi Y."/>
            <person name="Nakagawa K."/>
            <person name="Okumura K."/>
            <person name="Nagase T."/>
            <person name="Nomura N."/>
            <person name="Kikuchi H."/>
            <person name="Masuho Y."/>
            <person name="Yamashita R."/>
            <person name="Nakai K."/>
            <person name="Yada T."/>
            <person name="Nakamura Y."/>
            <person name="Ohara O."/>
            <person name="Isogai T."/>
            <person name="Sugano S."/>
        </authorList>
    </citation>
    <scope>NUCLEOTIDE SEQUENCE [LARGE SCALE MRNA] (ISOFORMS 2 AND 3)</scope>
    <source>
        <tissue>Testis</tissue>
    </source>
</reference>
<reference key="2">
    <citation type="journal article" date="2005" name="Nature">
        <title>Generation and annotation of the DNA sequences of human chromosomes 2 and 4.</title>
        <authorList>
            <person name="Hillier L.W."/>
            <person name="Graves T.A."/>
            <person name="Fulton R.S."/>
            <person name="Fulton L.A."/>
            <person name="Pepin K.H."/>
            <person name="Minx P."/>
            <person name="Wagner-McPherson C."/>
            <person name="Layman D."/>
            <person name="Wylie K."/>
            <person name="Sekhon M."/>
            <person name="Becker M.C."/>
            <person name="Fewell G.A."/>
            <person name="Delehaunty K.D."/>
            <person name="Miner T.L."/>
            <person name="Nash W.E."/>
            <person name="Kremitzki C."/>
            <person name="Oddy L."/>
            <person name="Du H."/>
            <person name="Sun H."/>
            <person name="Bradshaw-Cordum H."/>
            <person name="Ali J."/>
            <person name="Carter J."/>
            <person name="Cordes M."/>
            <person name="Harris A."/>
            <person name="Isak A."/>
            <person name="van Brunt A."/>
            <person name="Nguyen C."/>
            <person name="Du F."/>
            <person name="Courtney L."/>
            <person name="Kalicki J."/>
            <person name="Ozersky P."/>
            <person name="Abbott S."/>
            <person name="Armstrong J."/>
            <person name="Belter E.A."/>
            <person name="Caruso L."/>
            <person name="Cedroni M."/>
            <person name="Cotton M."/>
            <person name="Davidson T."/>
            <person name="Desai A."/>
            <person name="Elliott G."/>
            <person name="Erb T."/>
            <person name="Fronick C."/>
            <person name="Gaige T."/>
            <person name="Haakenson W."/>
            <person name="Haglund K."/>
            <person name="Holmes A."/>
            <person name="Harkins R."/>
            <person name="Kim K."/>
            <person name="Kruchowski S.S."/>
            <person name="Strong C.M."/>
            <person name="Grewal N."/>
            <person name="Goyea E."/>
            <person name="Hou S."/>
            <person name="Levy A."/>
            <person name="Martinka S."/>
            <person name="Mead K."/>
            <person name="McLellan M.D."/>
            <person name="Meyer R."/>
            <person name="Randall-Maher J."/>
            <person name="Tomlinson C."/>
            <person name="Dauphin-Kohlberg S."/>
            <person name="Kozlowicz-Reilly A."/>
            <person name="Shah N."/>
            <person name="Swearengen-Shahid S."/>
            <person name="Snider J."/>
            <person name="Strong J.T."/>
            <person name="Thompson J."/>
            <person name="Yoakum M."/>
            <person name="Leonard S."/>
            <person name="Pearman C."/>
            <person name="Trani L."/>
            <person name="Radionenko M."/>
            <person name="Waligorski J.E."/>
            <person name="Wang C."/>
            <person name="Rock S.M."/>
            <person name="Tin-Wollam A.-M."/>
            <person name="Maupin R."/>
            <person name="Latreille P."/>
            <person name="Wendl M.C."/>
            <person name="Yang S.-P."/>
            <person name="Pohl C."/>
            <person name="Wallis J.W."/>
            <person name="Spieth J."/>
            <person name="Bieri T.A."/>
            <person name="Berkowicz N."/>
            <person name="Nelson J.O."/>
            <person name="Osborne J."/>
            <person name="Ding L."/>
            <person name="Meyer R."/>
            <person name="Sabo A."/>
            <person name="Shotland Y."/>
            <person name="Sinha P."/>
            <person name="Wohldmann P.E."/>
            <person name="Cook L.L."/>
            <person name="Hickenbotham M.T."/>
            <person name="Eldred J."/>
            <person name="Williams D."/>
            <person name="Jones T.A."/>
            <person name="She X."/>
            <person name="Ciccarelli F.D."/>
            <person name="Izaurralde E."/>
            <person name="Taylor J."/>
            <person name="Schmutz J."/>
            <person name="Myers R.M."/>
            <person name="Cox D.R."/>
            <person name="Huang X."/>
            <person name="McPherson J.D."/>
            <person name="Mardis E.R."/>
            <person name="Clifton S.W."/>
            <person name="Warren W.C."/>
            <person name="Chinwalla A.T."/>
            <person name="Eddy S.R."/>
            <person name="Marra M.A."/>
            <person name="Ovcharenko I."/>
            <person name="Furey T.S."/>
            <person name="Miller W."/>
            <person name="Eichler E.E."/>
            <person name="Bork P."/>
            <person name="Suyama M."/>
            <person name="Torrents D."/>
            <person name="Waterston R.H."/>
            <person name="Wilson R.K."/>
        </authorList>
    </citation>
    <scope>NUCLEOTIDE SEQUENCE [LARGE SCALE GENOMIC DNA]</scope>
</reference>
<reference key="3">
    <citation type="submission" date="2005-09" db="EMBL/GenBank/DDBJ databases">
        <authorList>
            <person name="Mural R.J."/>
            <person name="Istrail S."/>
            <person name="Sutton G.G."/>
            <person name="Florea L."/>
            <person name="Halpern A.L."/>
            <person name="Mobarry C.M."/>
            <person name="Lippert R."/>
            <person name="Walenz B."/>
            <person name="Shatkay H."/>
            <person name="Dew I."/>
            <person name="Miller J.R."/>
            <person name="Flanigan M.J."/>
            <person name="Edwards N.J."/>
            <person name="Bolanos R."/>
            <person name="Fasulo D."/>
            <person name="Halldorsson B.V."/>
            <person name="Hannenhalli S."/>
            <person name="Turner R."/>
            <person name="Yooseph S."/>
            <person name="Lu F."/>
            <person name="Nusskern D.R."/>
            <person name="Shue B.C."/>
            <person name="Zheng X.H."/>
            <person name="Zhong F."/>
            <person name="Delcher A.L."/>
            <person name="Huson D.H."/>
            <person name="Kravitz S.A."/>
            <person name="Mouchard L."/>
            <person name="Reinert K."/>
            <person name="Remington K.A."/>
            <person name="Clark A.G."/>
            <person name="Waterman M.S."/>
            <person name="Eichler E.E."/>
            <person name="Adams M.D."/>
            <person name="Hunkapiller M.W."/>
            <person name="Myers E.W."/>
            <person name="Venter J.C."/>
        </authorList>
    </citation>
    <scope>NUCLEOTIDE SEQUENCE [LARGE SCALE GENOMIC DNA]</scope>
</reference>
<reference key="4">
    <citation type="journal article" date="2004" name="Genome Res.">
        <title>The status, quality, and expansion of the NIH full-length cDNA project: the Mammalian Gene Collection (MGC).</title>
        <authorList>
            <consortium name="The MGC Project Team"/>
        </authorList>
    </citation>
    <scope>NUCLEOTIDE SEQUENCE [LARGE SCALE MRNA] (ISOFORM 1)</scope>
    <source>
        <tissue>Testis</tissue>
    </source>
</reference>
<evidence type="ECO:0000250" key="1">
    <source>
        <dbReference type="UniProtKB" id="P86049"/>
    </source>
</evidence>
<evidence type="ECO:0000255" key="2">
    <source>
        <dbReference type="PROSITE-ProRule" id="PRU00176"/>
    </source>
</evidence>
<evidence type="ECO:0000303" key="3">
    <source>
    </source>
</evidence>
<feature type="chain" id="PRO_0000305315" description="Probable RNA-binding protein 46">
    <location>
        <begin position="1"/>
        <end position="533"/>
    </location>
</feature>
<feature type="domain" description="RRM 1" evidence="2">
    <location>
        <begin position="61"/>
        <end position="139"/>
    </location>
</feature>
<feature type="domain" description="RRM 2" evidence="2">
    <location>
        <begin position="141"/>
        <end position="223"/>
    </location>
</feature>
<feature type="domain" description="RRM 3" evidence="2">
    <location>
        <begin position="236"/>
        <end position="308"/>
    </location>
</feature>
<feature type="splice variant" id="VSP_055251" description="In isoform 2." evidence="3">
    <original>DYNFHRSSINSLSPVSATLSSGTPSVLPYTSRPYSYPGYPLSPTISLANGSHVGQRLCISNQASFF</original>
    <variation>GPF</variation>
    <location>
        <begin position="468"/>
        <end position="533"/>
    </location>
</feature>
<feature type="splice variant" id="VSP_055252" description="In isoform 3." evidence="3">
    <original>YNFHRSSINSLSPVSATLSSGTPSVLPYTSRPYSYPGYPLSPTISLANGSHVGQRLCISNQASFF</original>
    <variation>REHNLFSLDLCRRIWRK</variation>
    <location>
        <begin position="469"/>
        <end position="533"/>
    </location>
</feature>
<sequence>MNEENIDGTNGCSKVRTGIQNEAALLALMEKTGYNMVQENGQRKFGGPPPGWEGPPPPRGCEVFVGKIPRDMYEDELVPVFERAGKIYEFRLMMEFSGENRGYAFVMYTTKEEAQLAIRILNNYEIRPGKFIGVCVSLDNCRLFIGAIPKEKKKEEILDEMKKVTEGVVDVIVYPSATDKTKNRGFAFVEYESHRAAAMARRKLIPGTFQLWGHTIQVDWADPEKEVDEETMQRVKVLYVRNLMISTTEETIKAEFNKFKPGAVERVKKLRDYAFVHFFNREDAVAAMSVMNGKCIDGASIEVTLAKPVNKENTWRQHLNGQISPNSENLIVFANKEESHPKTLGKLPTLPARLNGQHSPSPPEVERCTYPFYPGTKLTPISMYSLKSNHFNSAVMHLDYYCNKNNWAPPEYYLYSTTSQDGKVLLVYKIVIPAIANGSQSYFMPDKLCTTLEDAKELAAQFTLLHLDYNFHRSSINSLSPVSATLSSGTPSVLPYTSRPYSYPGYPLSPTISLANGSHVGQRLCISNQASFF</sequence>